<comment type="function">
    <text evidence="1">When phosphorylated, plays a role in filament reorganization.</text>
</comment>
<comment type="subunit">
    <text>Heterotetramer of two type I and two type II keratins. Keratin-18 associates with keratin-8.</text>
</comment>
<comment type="tissue specificity">
    <text evidence="4">Expressed at high levels in notochord and low levels in adult liver.</text>
</comment>
<comment type="developmental stage">
    <text evidence="4">Expression is concentrated in the notochord with strongest expression in the embryo at stages 17 to 27, and slightly less in the endoderm. It is present in the oocyte and expression increases from late gastrula. Accumulation peaks by late neurula and is greatly reduced by the tadpole stage.</text>
</comment>
<comment type="PTM">
    <text evidence="1">Proteolytically cleaved by caspases during epithelial cell apoptosis.</text>
</comment>
<comment type="miscellaneous">
    <text>There are two types of cytoskeletal and microfibrillar keratin: I (acidic; 40-55 kDa) and II (neutral to basic; 56-70 kDa).</text>
</comment>
<comment type="similarity">
    <text evidence="2">Belongs to the intermediate filament family.</text>
</comment>
<comment type="sequence caution" evidence="5">
    <conflict type="erroneous initiation">
        <sequence resource="EMBL-CDS" id="AAH42269"/>
    </conflict>
</comment>
<protein>
    <recommendedName>
        <fullName>Keratin, type I cytoskeletal 18-A</fullName>
    </recommendedName>
    <alternativeName>
        <fullName>Cytokeratin-18-A</fullName>
        <shortName>CK-18-A</shortName>
    </alternativeName>
    <alternativeName>
        <fullName>Keratin, type I cytoskeletal endo B</fullName>
    </alternativeName>
    <alternativeName>
        <fullName>Keratin-18-A</fullName>
        <shortName>K18-A</shortName>
    </alternativeName>
</protein>
<organism>
    <name type="scientific">Xenopus laevis</name>
    <name type="common">African clawed frog</name>
    <dbReference type="NCBI Taxonomy" id="8355"/>
    <lineage>
        <taxon>Eukaryota</taxon>
        <taxon>Metazoa</taxon>
        <taxon>Chordata</taxon>
        <taxon>Craniata</taxon>
        <taxon>Vertebrata</taxon>
        <taxon>Euteleostomi</taxon>
        <taxon>Amphibia</taxon>
        <taxon>Batrachia</taxon>
        <taxon>Anura</taxon>
        <taxon>Pipoidea</taxon>
        <taxon>Pipidae</taxon>
        <taxon>Xenopodinae</taxon>
        <taxon>Xenopus</taxon>
        <taxon>Xenopus</taxon>
    </lineage>
</organism>
<keyword id="KW-0175">Coiled coil</keyword>
<keyword id="KW-0403">Intermediate filament</keyword>
<keyword id="KW-0416">Keratin</keyword>
<keyword id="KW-0597">Phosphoprotein</keyword>
<keyword id="KW-1185">Reference proteome</keyword>
<reference key="1">
    <citation type="submission" date="2004-06" db="EMBL/GenBank/DDBJ databases">
        <authorList>
            <consortium name="NIH - Xenopus Gene Collection (XGC) project"/>
        </authorList>
    </citation>
    <scope>NUCLEOTIDE SEQUENCE [LARGE SCALE MRNA]</scope>
    <source>
        <tissue>Embryo</tissue>
    </source>
</reference>
<reference key="2">
    <citation type="journal article" date="1988" name="Genes Dev.">
        <title>Xenopus endo B is a keratin preferentially expressed in the embryonic notochord.</title>
        <authorList>
            <person name="Laflamme S.E."/>
            <person name="Jamrich M."/>
            <person name="Richter K."/>
            <person name="Sargent T.D."/>
            <person name="Dawid I.B."/>
        </authorList>
    </citation>
    <scope>NUCLEOTIDE SEQUENCE [MRNA] OF 61-428</scope>
    <scope>TISSUE SPECIFICITY</scope>
    <scope>DEVELOPMENTAL STAGE</scope>
    <source>
        <tissue>Neurula</tissue>
    </source>
</reference>
<evidence type="ECO:0000250" key="1"/>
<evidence type="ECO:0000255" key="2">
    <source>
        <dbReference type="PROSITE-ProRule" id="PRU01188"/>
    </source>
</evidence>
<evidence type="ECO:0000256" key="3">
    <source>
        <dbReference type="SAM" id="MobiDB-lite"/>
    </source>
</evidence>
<evidence type="ECO:0000269" key="4">
    <source>
    </source>
</evidence>
<evidence type="ECO:0000305" key="5"/>
<gene>
    <name type="primary">krt18-a</name>
</gene>
<sequence>MSSSRSVYSSSSVVGGSPYRSLSSAPRFTPGSSAASVHAGAGGSGARISVSRVSTVGSGFGGGFSGASNVNLFGGVQNEKETMQDLNDRLASYLERVRSLESANKKLEVQIRQHTEKKGPAKDWSPYYMTIEDLKKQVFNSIVENSQLVLQIDNARLAADDFRVKYESEVAIRMSVETDIGGLRKLIDDTNISRLNLENEFESLKEELIFLKKNHQDDVNELQAQIASSAVTVEVDAPKSQDLGKIMADLRAQYDEMAQKNREDVEKLYQSKVEEHTVQVNLDAEALHTAKSSVTELRRTMQSLEIELESLRNQKASLEGTLHDTEARYAMELEMLGGTAMALETELVQVRNDCQRQQQEYQALLNTKMKLEAEIQTYRRLLEGDSFDLQDAVPVVTTQTVKKVITTTQRLVDGKVVAESNNTEVIKS</sequence>
<feature type="initiator methionine" description="Removed" evidence="1">
    <location>
        <position position="1"/>
    </location>
</feature>
<feature type="chain" id="PRO_0000063669" description="Keratin, type I cytoskeletal 18-A">
    <location>
        <begin position="2"/>
        <end position="428"/>
    </location>
</feature>
<feature type="domain" description="IF rod" evidence="2">
    <location>
        <begin position="79"/>
        <end position="389"/>
    </location>
</feature>
<feature type="region of interest" description="Head" evidence="1">
    <location>
        <begin position="2"/>
        <end position="78"/>
    </location>
</feature>
<feature type="region of interest" description="Disordered" evidence="3">
    <location>
        <begin position="24"/>
        <end position="45"/>
    </location>
</feature>
<feature type="region of interest" description="Coil 1A">
    <location>
        <begin position="79"/>
        <end position="114"/>
    </location>
</feature>
<feature type="region of interest" description="Linker 1">
    <location>
        <begin position="115"/>
        <end position="130"/>
    </location>
</feature>
<feature type="region of interest" description="Coil 1B">
    <location>
        <begin position="131"/>
        <end position="222"/>
    </location>
</feature>
<feature type="region of interest" description="Linker 12">
    <location>
        <begin position="223"/>
        <end position="246"/>
    </location>
</feature>
<feature type="region of interest" description="Coil 2">
    <location>
        <begin position="247"/>
        <end position="384"/>
    </location>
</feature>
<feature type="region of interest" description="Tail">
    <location>
        <begin position="385"/>
        <end position="428"/>
    </location>
</feature>
<feature type="site" description="Cleavage; by caspases" evidence="1">
    <location>
        <begin position="236"/>
        <end position="237"/>
    </location>
</feature>
<feature type="site" description="Stutter">
    <location>
        <position position="329"/>
    </location>
</feature>
<feature type="sequence conflict" description="In Ref. 2; CAA68372." evidence="5" ref="2">
    <original>S</original>
    <variation>T</variation>
    <location>
        <position position="228"/>
    </location>
</feature>
<feature type="sequence conflict" description="In Ref. 2; CAA68372." evidence="5" ref="2">
    <original>EH</original>
    <variation>DD</variation>
    <location>
        <begin position="275"/>
        <end position="276"/>
    </location>
</feature>
<proteinExistence type="evidence at transcript level"/>
<dbReference type="EMBL" id="BC042269">
    <property type="protein sequence ID" value="AAH42269.1"/>
    <property type="status" value="ALT_INIT"/>
    <property type="molecule type" value="mRNA"/>
</dbReference>
<dbReference type="EMBL" id="BC072305">
    <property type="protein sequence ID" value="AAH72305.1"/>
    <property type="molecule type" value="mRNA"/>
</dbReference>
<dbReference type="EMBL" id="Y00230">
    <property type="protein sequence ID" value="CAA68372.1"/>
    <property type="molecule type" value="mRNA"/>
</dbReference>
<dbReference type="PIR" id="A28825">
    <property type="entry name" value="A28825"/>
</dbReference>
<dbReference type="RefSeq" id="NP_001082454.1">
    <property type="nucleotide sequence ID" value="NM_001088985.1"/>
</dbReference>
<dbReference type="SMR" id="P08802"/>
<dbReference type="BioGRID" id="99814">
    <property type="interactions" value="1"/>
</dbReference>
<dbReference type="GeneID" id="398482"/>
<dbReference type="KEGG" id="xla:398482"/>
<dbReference type="AGR" id="Xenbase:XB-GENE-6256308"/>
<dbReference type="CTD" id="398482"/>
<dbReference type="Xenbase" id="XB-GENE-6256308">
    <property type="gene designation" value="krt18.S"/>
</dbReference>
<dbReference type="OrthoDB" id="2441647at2759"/>
<dbReference type="Proteomes" id="UP000186698">
    <property type="component" value="Chromosome 2S"/>
</dbReference>
<dbReference type="Bgee" id="398482">
    <property type="expression patterns" value="Expressed in neurula embryo and 19 other cell types or tissues"/>
</dbReference>
<dbReference type="GO" id="GO:0005856">
    <property type="term" value="C:cytoskeleton"/>
    <property type="evidence" value="ECO:0000318"/>
    <property type="project" value="GO_Central"/>
</dbReference>
<dbReference type="GO" id="GO:0045095">
    <property type="term" value="C:keratin filament"/>
    <property type="evidence" value="ECO:0000318"/>
    <property type="project" value="GO_Central"/>
</dbReference>
<dbReference type="GO" id="GO:0005198">
    <property type="term" value="F:structural molecule activity"/>
    <property type="evidence" value="ECO:0007669"/>
    <property type="project" value="InterPro"/>
</dbReference>
<dbReference type="GO" id="GO:0045104">
    <property type="term" value="P:intermediate filament cytoskeleton organization"/>
    <property type="evidence" value="ECO:0000318"/>
    <property type="project" value="GO_Central"/>
</dbReference>
<dbReference type="FunFam" id="1.20.5.1160:FF:000002">
    <property type="entry name" value="Type I keratin 10"/>
    <property type="match status" value="1"/>
</dbReference>
<dbReference type="FunFam" id="1.20.5.170:FF:000002">
    <property type="entry name" value="Type I keratin KA11"/>
    <property type="match status" value="1"/>
</dbReference>
<dbReference type="FunFam" id="1.20.5.500:FF:000001">
    <property type="entry name" value="Type II keratin 23"/>
    <property type="match status" value="1"/>
</dbReference>
<dbReference type="Gene3D" id="1.20.5.170">
    <property type="match status" value="1"/>
</dbReference>
<dbReference type="Gene3D" id="1.20.5.500">
    <property type="entry name" value="Single helix bin"/>
    <property type="match status" value="1"/>
</dbReference>
<dbReference type="Gene3D" id="1.20.5.1160">
    <property type="entry name" value="Vasodilator-stimulated phosphoprotein"/>
    <property type="match status" value="1"/>
</dbReference>
<dbReference type="InterPro" id="IPR018039">
    <property type="entry name" value="IF_conserved"/>
</dbReference>
<dbReference type="InterPro" id="IPR039008">
    <property type="entry name" value="IF_rod_dom"/>
</dbReference>
<dbReference type="InterPro" id="IPR002957">
    <property type="entry name" value="Keratin_I"/>
</dbReference>
<dbReference type="PANTHER" id="PTHR23239">
    <property type="entry name" value="INTERMEDIATE FILAMENT"/>
    <property type="match status" value="1"/>
</dbReference>
<dbReference type="PANTHER" id="PTHR23239:SF349">
    <property type="entry name" value="KERATIN, TYPE I CYTOSKELETAL 18"/>
    <property type="match status" value="1"/>
</dbReference>
<dbReference type="Pfam" id="PF00038">
    <property type="entry name" value="Filament"/>
    <property type="match status" value="1"/>
</dbReference>
<dbReference type="PRINTS" id="PR01248">
    <property type="entry name" value="TYPE1KERATIN"/>
</dbReference>
<dbReference type="SMART" id="SM01391">
    <property type="entry name" value="Filament"/>
    <property type="match status" value="1"/>
</dbReference>
<dbReference type="SUPFAM" id="SSF64593">
    <property type="entry name" value="Intermediate filament protein, coiled coil region"/>
    <property type="match status" value="2"/>
</dbReference>
<dbReference type="PROSITE" id="PS00226">
    <property type="entry name" value="IF_ROD_1"/>
    <property type="match status" value="1"/>
</dbReference>
<dbReference type="PROSITE" id="PS51842">
    <property type="entry name" value="IF_ROD_2"/>
    <property type="match status" value="1"/>
</dbReference>
<accession>P08802</accession>
<accession>Q6INH6</accession>
<accession>Q8AVI2</accession>
<name>K118A_XENLA</name>